<feature type="chain" id="PRO_0000389495" description="Putative cytochrome bd menaquinol oxidase subunit I">
    <location>
        <begin position="1"/>
        <end position="443"/>
    </location>
</feature>
<feature type="transmembrane region" description="Helical" evidence="2">
    <location>
        <begin position="19"/>
        <end position="39"/>
    </location>
</feature>
<feature type="transmembrane region" description="Helical" evidence="2">
    <location>
        <begin position="60"/>
        <end position="80"/>
    </location>
</feature>
<feature type="transmembrane region" description="Helical" evidence="2">
    <location>
        <begin position="93"/>
        <end position="113"/>
    </location>
</feature>
<feature type="transmembrane region" description="Helical" evidence="2">
    <location>
        <begin position="125"/>
        <end position="145"/>
    </location>
</feature>
<feature type="transmembrane region" description="Helical" evidence="2">
    <location>
        <begin position="176"/>
        <end position="196"/>
    </location>
</feature>
<feature type="transmembrane region" description="Helical" evidence="2">
    <location>
        <begin position="219"/>
        <end position="239"/>
    </location>
</feature>
<feature type="transmembrane region" description="Helical" evidence="2">
    <location>
        <begin position="322"/>
        <end position="342"/>
    </location>
</feature>
<feature type="transmembrane region" description="Helical" evidence="2">
    <location>
        <begin position="357"/>
        <end position="377"/>
    </location>
</feature>
<feature type="transmembrane region" description="Helical" evidence="2">
    <location>
        <begin position="405"/>
        <end position="425"/>
    </location>
</feature>
<feature type="binding site" description="axial binding residue" evidence="1">
    <location>
        <position position="182"/>
    </location>
    <ligand>
        <name>heme b</name>
        <dbReference type="ChEBI" id="CHEBI:60344"/>
        <label>b558</label>
    </ligand>
    <ligandPart>
        <name>Fe</name>
        <dbReference type="ChEBI" id="CHEBI:18248"/>
    </ligandPart>
</feature>
<dbReference type="EC" id="1.10.3.-"/>
<dbReference type="EMBL" id="AF008220">
    <property type="protein sequence ID" value="AAC00371.1"/>
    <property type="status" value="ALT_INIT"/>
    <property type="molecule type" value="Genomic_DNA"/>
</dbReference>
<dbReference type="EMBL" id="AL009126">
    <property type="protein sequence ID" value="CAB15049.2"/>
    <property type="molecule type" value="Genomic_DNA"/>
</dbReference>
<dbReference type="RefSeq" id="NP_390949.2">
    <property type="nucleotide sequence ID" value="NC_000964.3"/>
</dbReference>
<dbReference type="RefSeq" id="WP_004399130.1">
    <property type="nucleotide sequence ID" value="NZ_OZ025638.1"/>
</dbReference>
<dbReference type="SMR" id="C0SP90"/>
<dbReference type="FunCoup" id="C0SP90">
    <property type="interactions" value="164"/>
</dbReference>
<dbReference type="STRING" id="224308.BSU30710"/>
<dbReference type="PaxDb" id="224308-BSU30710"/>
<dbReference type="EnsemblBacteria" id="CAB15049">
    <property type="protein sequence ID" value="CAB15049"/>
    <property type="gene ID" value="BSU_30710"/>
</dbReference>
<dbReference type="GeneID" id="937142"/>
<dbReference type="KEGG" id="bsu:BSU30710"/>
<dbReference type="PATRIC" id="fig|224308.179.peg.3329"/>
<dbReference type="eggNOG" id="COG1271">
    <property type="taxonomic scope" value="Bacteria"/>
</dbReference>
<dbReference type="InParanoid" id="C0SP90"/>
<dbReference type="OrthoDB" id="9807042at2"/>
<dbReference type="PhylomeDB" id="C0SP90"/>
<dbReference type="BioCyc" id="BSUB:BSU30710-MONOMER"/>
<dbReference type="Proteomes" id="UP000001570">
    <property type="component" value="Chromosome"/>
</dbReference>
<dbReference type="GO" id="GO:0070069">
    <property type="term" value="C:cytochrome complex"/>
    <property type="evidence" value="ECO:0000318"/>
    <property type="project" value="GO_Central"/>
</dbReference>
<dbReference type="GO" id="GO:0005886">
    <property type="term" value="C:plasma membrane"/>
    <property type="evidence" value="ECO:0000318"/>
    <property type="project" value="GO_Central"/>
</dbReference>
<dbReference type="GO" id="GO:0009055">
    <property type="term" value="F:electron transfer activity"/>
    <property type="evidence" value="ECO:0000318"/>
    <property type="project" value="GO_Central"/>
</dbReference>
<dbReference type="GO" id="GO:0020037">
    <property type="term" value="F:heme binding"/>
    <property type="evidence" value="ECO:0000318"/>
    <property type="project" value="GO_Central"/>
</dbReference>
<dbReference type="GO" id="GO:0046872">
    <property type="term" value="F:metal ion binding"/>
    <property type="evidence" value="ECO:0007669"/>
    <property type="project" value="UniProtKB-KW"/>
</dbReference>
<dbReference type="GO" id="GO:0016682">
    <property type="term" value="F:oxidoreductase activity, acting on diphenols and related substances as donors, oxygen as acceptor"/>
    <property type="evidence" value="ECO:0000318"/>
    <property type="project" value="GO_Central"/>
</dbReference>
<dbReference type="GO" id="GO:0019646">
    <property type="term" value="P:aerobic electron transport chain"/>
    <property type="evidence" value="ECO:0000318"/>
    <property type="project" value="GO_Central"/>
</dbReference>
<dbReference type="GO" id="GO:0030435">
    <property type="term" value="P:sporulation resulting in formation of a cellular spore"/>
    <property type="evidence" value="ECO:0007669"/>
    <property type="project" value="UniProtKB-KW"/>
</dbReference>
<dbReference type="InterPro" id="IPR002585">
    <property type="entry name" value="Cyt-d_ubiquinol_oxidase_su_1"/>
</dbReference>
<dbReference type="PANTHER" id="PTHR30365:SF14">
    <property type="entry name" value="CYTOCHROME BD MENAQUINOL OXIDASE SUBUNIT I-RELATED"/>
    <property type="match status" value="1"/>
</dbReference>
<dbReference type="PANTHER" id="PTHR30365">
    <property type="entry name" value="CYTOCHROME D UBIQUINOL OXIDASE"/>
    <property type="match status" value="1"/>
</dbReference>
<dbReference type="Pfam" id="PF01654">
    <property type="entry name" value="Cyt_bd_oxida_I"/>
    <property type="match status" value="1"/>
</dbReference>
<dbReference type="PIRSF" id="PIRSF006446">
    <property type="entry name" value="Cyt_quinol_oxidase_1"/>
    <property type="match status" value="1"/>
</dbReference>
<accession>C0SP90</accession>
<accession>O34655</accession>
<accession>Q795N7</accession>
<protein>
    <recommendedName>
        <fullName>Putative cytochrome bd menaquinol oxidase subunit I</fullName>
        <ecNumber>1.10.3.-</ecNumber>
    </recommendedName>
</protein>
<organism>
    <name type="scientific">Bacillus subtilis (strain 168)</name>
    <dbReference type="NCBI Taxonomy" id="224308"/>
    <lineage>
        <taxon>Bacteria</taxon>
        <taxon>Bacillati</taxon>
        <taxon>Bacillota</taxon>
        <taxon>Bacilli</taxon>
        <taxon>Bacillales</taxon>
        <taxon>Bacillaceae</taxon>
        <taxon>Bacillus</taxon>
    </lineage>
</organism>
<keyword id="KW-1003">Cell membrane</keyword>
<keyword id="KW-0249">Electron transport</keyword>
<keyword id="KW-0349">Heme</keyword>
<keyword id="KW-0408">Iron</keyword>
<keyword id="KW-0472">Membrane</keyword>
<keyword id="KW-0479">Metal-binding</keyword>
<keyword id="KW-0560">Oxidoreductase</keyword>
<keyword id="KW-1185">Reference proteome</keyword>
<keyword id="KW-0749">Sporulation</keyword>
<keyword id="KW-0812">Transmembrane</keyword>
<keyword id="KW-1133">Transmembrane helix</keyword>
<keyword id="KW-0813">Transport</keyword>
<name>YTHA_BACSU</name>
<sequence>MDDLVLARSLFGTTMGFHIIFATLGVGLPLMILVAELIYQKTKDDHYAIMAKRWTKAQAVLLGVAIPTGTIAGTQLALLWPGFMEVIGRVMSLPFQIEIYAFFVEALFMSIYVYAADRLSPAMRIVAVFFVLVGAAASAVLITNVHAFEGTPAGFKILNGKITDVDPWAAFFNPSFFITAGHVVLSAFMTGAFIVASVAAYKMIRTRKKERVYRFHRKALLLALTIGGIFSLLTALNGHESAQMLYEYQPEKLAGAEGLFETRSHAPLAIGGFTDPNEEKVKWAIEIPWALSFLAANRFDTVVKGLNAFPRDEWPPLFIHTLFNAMVGVGMLLILYSIIGVVWRKVLKKDRFPTWLLIIFMTAGPFSLIGIEFGWIFACTGRQPWVIYHLLKTSDVVTTTGSIGVLFLFFTFVYAVLGAAVVYVLLYYFRKHPVDEDLNTAES</sequence>
<evidence type="ECO:0000250" key="1"/>
<evidence type="ECO:0000255" key="2"/>
<evidence type="ECO:0000269" key="3">
    <source>
    </source>
</evidence>
<evidence type="ECO:0000269" key="4">
    <source>
    </source>
</evidence>
<evidence type="ECO:0000305" key="5"/>
<gene>
    <name type="primary">ythA</name>
    <name type="ordered locus">BSU30710</name>
</gene>
<proteinExistence type="evidence at protein level"/>
<comment type="function">
    <text evidence="3">May have a role in sporulation. Can compensate for the loss of cytochrome aa3.</text>
</comment>
<comment type="cofactor">
    <cofactor evidence="1">
        <name>heme b</name>
        <dbReference type="ChEBI" id="CHEBI:60344"/>
    </cofactor>
    <text evidence="1">Binds 1 protoheme IX group (heme b).</text>
</comment>
<comment type="subcellular location">
    <subcellularLocation>
        <location evidence="5">Cell membrane</location>
        <topology evidence="5">Multi-pass membrane protein</topology>
    </subcellularLocation>
</comment>
<comment type="disruption phenotype">
    <text evidence="4">Not essential.</text>
</comment>
<comment type="similarity">
    <text evidence="5">Belongs to the cytochrome ubiquinol oxidase subunit 1 family.</text>
</comment>
<comment type="sequence caution" evidence="5">
    <conflict type="erroneous initiation">
        <sequence resource="EMBL-CDS" id="AAC00371"/>
    </conflict>
    <text>Truncated N-terminus.</text>
</comment>
<reference key="1">
    <citation type="journal article" date="1997" name="Microbiology">
        <title>Sequencing and functional annotation of the Bacillus subtilis genes in the 200 kb rrnB-dnaB region.</title>
        <authorList>
            <person name="Lapidus A."/>
            <person name="Galleron N."/>
            <person name="Sorokin A."/>
            <person name="Ehrlich S.D."/>
        </authorList>
    </citation>
    <scope>NUCLEOTIDE SEQUENCE [GENOMIC DNA]</scope>
</reference>
<reference key="2">
    <citation type="journal article" date="1997" name="Nature">
        <title>The complete genome sequence of the Gram-positive bacterium Bacillus subtilis.</title>
        <authorList>
            <person name="Kunst F."/>
            <person name="Ogasawara N."/>
            <person name="Moszer I."/>
            <person name="Albertini A.M."/>
            <person name="Alloni G."/>
            <person name="Azevedo V."/>
            <person name="Bertero M.G."/>
            <person name="Bessieres P."/>
            <person name="Bolotin A."/>
            <person name="Borchert S."/>
            <person name="Borriss R."/>
            <person name="Boursier L."/>
            <person name="Brans A."/>
            <person name="Braun M."/>
            <person name="Brignell S.C."/>
            <person name="Bron S."/>
            <person name="Brouillet S."/>
            <person name="Bruschi C.V."/>
            <person name="Caldwell B."/>
            <person name="Capuano V."/>
            <person name="Carter N.M."/>
            <person name="Choi S.-K."/>
            <person name="Codani J.-J."/>
            <person name="Connerton I.F."/>
            <person name="Cummings N.J."/>
            <person name="Daniel R.A."/>
            <person name="Denizot F."/>
            <person name="Devine K.M."/>
            <person name="Duesterhoeft A."/>
            <person name="Ehrlich S.D."/>
            <person name="Emmerson P.T."/>
            <person name="Entian K.-D."/>
            <person name="Errington J."/>
            <person name="Fabret C."/>
            <person name="Ferrari E."/>
            <person name="Foulger D."/>
            <person name="Fritz C."/>
            <person name="Fujita M."/>
            <person name="Fujita Y."/>
            <person name="Fuma S."/>
            <person name="Galizzi A."/>
            <person name="Galleron N."/>
            <person name="Ghim S.-Y."/>
            <person name="Glaser P."/>
            <person name="Goffeau A."/>
            <person name="Golightly E.J."/>
            <person name="Grandi G."/>
            <person name="Guiseppi G."/>
            <person name="Guy B.J."/>
            <person name="Haga K."/>
            <person name="Haiech J."/>
            <person name="Harwood C.R."/>
            <person name="Henaut A."/>
            <person name="Hilbert H."/>
            <person name="Holsappel S."/>
            <person name="Hosono S."/>
            <person name="Hullo M.-F."/>
            <person name="Itaya M."/>
            <person name="Jones L.-M."/>
            <person name="Joris B."/>
            <person name="Karamata D."/>
            <person name="Kasahara Y."/>
            <person name="Klaerr-Blanchard M."/>
            <person name="Klein C."/>
            <person name="Kobayashi Y."/>
            <person name="Koetter P."/>
            <person name="Koningstein G."/>
            <person name="Krogh S."/>
            <person name="Kumano M."/>
            <person name="Kurita K."/>
            <person name="Lapidus A."/>
            <person name="Lardinois S."/>
            <person name="Lauber J."/>
            <person name="Lazarevic V."/>
            <person name="Lee S.-M."/>
            <person name="Levine A."/>
            <person name="Liu H."/>
            <person name="Masuda S."/>
            <person name="Mauel C."/>
            <person name="Medigue C."/>
            <person name="Medina N."/>
            <person name="Mellado R.P."/>
            <person name="Mizuno M."/>
            <person name="Moestl D."/>
            <person name="Nakai S."/>
            <person name="Noback M."/>
            <person name="Noone D."/>
            <person name="O'Reilly M."/>
            <person name="Ogawa K."/>
            <person name="Ogiwara A."/>
            <person name="Oudega B."/>
            <person name="Park S.-H."/>
            <person name="Parro V."/>
            <person name="Pohl T.M."/>
            <person name="Portetelle D."/>
            <person name="Porwollik S."/>
            <person name="Prescott A.M."/>
            <person name="Presecan E."/>
            <person name="Pujic P."/>
            <person name="Purnelle B."/>
            <person name="Rapoport G."/>
            <person name="Rey M."/>
            <person name="Reynolds S."/>
            <person name="Rieger M."/>
            <person name="Rivolta C."/>
            <person name="Rocha E."/>
            <person name="Roche B."/>
            <person name="Rose M."/>
            <person name="Sadaie Y."/>
            <person name="Sato T."/>
            <person name="Scanlan E."/>
            <person name="Schleich S."/>
            <person name="Schroeter R."/>
            <person name="Scoffone F."/>
            <person name="Sekiguchi J."/>
            <person name="Sekowska A."/>
            <person name="Seror S.J."/>
            <person name="Serror P."/>
            <person name="Shin B.-S."/>
            <person name="Soldo B."/>
            <person name="Sorokin A."/>
            <person name="Tacconi E."/>
            <person name="Takagi T."/>
            <person name="Takahashi H."/>
            <person name="Takemaru K."/>
            <person name="Takeuchi M."/>
            <person name="Tamakoshi A."/>
            <person name="Tanaka T."/>
            <person name="Terpstra P."/>
            <person name="Tognoni A."/>
            <person name="Tosato V."/>
            <person name="Uchiyama S."/>
            <person name="Vandenbol M."/>
            <person name="Vannier F."/>
            <person name="Vassarotti A."/>
            <person name="Viari A."/>
            <person name="Wambutt R."/>
            <person name="Wedler E."/>
            <person name="Wedler H."/>
            <person name="Weitzenegger T."/>
            <person name="Winters P."/>
            <person name="Wipat A."/>
            <person name="Yamamoto H."/>
            <person name="Yamane K."/>
            <person name="Yasumoto K."/>
            <person name="Yata K."/>
            <person name="Yoshida K."/>
            <person name="Yoshikawa H.-F."/>
            <person name="Zumstein E."/>
            <person name="Yoshikawa H."/>
            <person name="Danchin A."/>
        </authorList>
    </citation>
    <scope>NUCLEOTIDE SEQUENCE [LARGE SCALE GENOMIC DNA]</scope>
    <source>
        <strain>168</strain>
    </source>
</reference>
<reference key="3">
    <citation type="journal article" date="1998" name="J. Bacteriol.">
        <title>Cytochrome bd biosynthesis in Bacillus subtilis: characterization of the cydABCD operon.</title>
        <authorList>
            <person name="Winstedt L."/>
            <person name="Yoshida K.-I."/>
            <person name="Fujita Y."/>
            <person name="von Wachenfeldt C."/>
        </authorList>
    </citation>
    <scope>DISCUSSION OF SEQUENCE</scope>
</reference>
<reference key="4">
    <citation type="journal article" date="2000" name="J. Bacteriol.">
        <title>Terminal oxidases of Bacillus subtilis strain 168: one quinol oxidase, cytochrome aa(3) or cytochrome bd, is required for aerobic growth.</title>
        <authorList>
            <person name="Winstedt L."/>
            <person name="von Wachenfeldt C."/>
        </authorList>
    </citation>
    <scope>FUNCTION IN SPORULATION</scope>
</reference>
<reference key="5">
    <citation type="journal article" date="2007" name="J. Bacteriol.">
        <title>Essential bacterial functions encoded by gene pairs.</title>
        <authorList>
            <person name="Thomaides H.B."/>
            <person name="Davison E.J."/>
            <person name="Burston L."/>
            <person name="Johnson H."/>
            <person name="Brown D.R."/>
            <person name="Hunt A.C."/>
            <person name="Errington J."/>
            <person name="Czaplewski L."/>
        </authorList>
    </citation>
    <scope>DISRUPTION PHENOTYPE</scope>
</reference>